<comment type="function">
    <text evidence="1">The RuvA-RuvB-RuvC complex processes Holliday junction (HJ) DNA during genetic recombination and DNA repair, while the RuvA-RuvB complex plays an important role in the rescue of blocked DNA replication forks via replication fork reversal (RFR). RuvA specifically binds to HJ cruciform DNA, conferring on it an open structure. The RuvB hexamer acts as an ATP-dependent pump, pulling dsDNA into and through the RuvAB complex. RuvB forms 2 homohexamers on either side of HJ DNA bound by 1 or 2 RuvA tetramers; 4 subunits per hexamer contact DNA at a time. Coordinated motions by a converter formed by DNA-disengaged RuvB subunits stimulates ATP hydrolysis and nucleotide exchange. Immobilization of the converter enables RuvB to convert the ATP-contained energy into a lever motion, pulling 2 nucleotides of DNA out of the RuvA tetramer per ATP hydrolyzed, thus driving DNA branch migration. The RuvB motors rotate together with the DNA substrate, which together with the progressing nucleotide cycle form the mechanistic basis for DNA recombination by continuous HJ branch migration. Branch migration allows RuvC to scan DNA until it finds its consensus sequence, where it cleaves and resolves cruciform DNA.</text>
</comment>
<comment type="catalytic activity">
    <reaction evidence="1">
        <text>ATP + H2O = ADP + phosphate + H(+)</text>
        <dbReference type="Rhea" id="RHEA:13065"/>
        <dbReference type="ChEBI" id="CHEBI:15377"/>
        <dbReference type="ChEBI" id="CHEBI:15378"/>
        <dbReference type="ChEBI" id="CHEBI:30616"/>
        <dbReference type="ChEBI" id="CHEBI:43474"/>
        <dbReference type="ChEBI" id="CHEBI:456216"/>
    </reaction>
</comment>
<comment type="subunit">
    <text evidence="1">Homohexamer. Forms an RuvA(8)-RuvB(12)-Holliday junction (HJ) complex. HJ DNA is sandwiched between 2 RuvA tetramers; dsDNA enters through RuvA and exits via RuvB. An RuvB hexamer assembles on each DNA strand where it exits the tetramer. Each RuvB hexamer is contacted by two RuvA subunits (via domain III) on 2 adjacent RuvB subunits; this complex drives branch migration. In the full resolvosome a probable DNA-RuvA(4)-RuvB(12)-RuvC(2) complex forms which resolves the HJ.</text>
</comment>
<comment type="subcellular location">
    <subcellularLocation>
        <location evidence="1">Cytoplasm</location>
    </subcellularLocation>
</comment>
<comment type="domain">
    <text evidence="1">Has 3 domains, the large (RuvB-L) and small ATPase (RuvB-S) domains and the C-terminal head (RuvB-H) domain. The head domain binds DNA, while the ATPase domains jointly bind ATP, ADP or are empty depending on the state of the subunit in the translocation cycle. During a single DNA translocation step the structure of each domain remains the same, but their relative positions change.</text>
</comment>
<comment type="similarity">
    <text evidence="1">Belongs to the RuvB family.</text>
</comment>
<name>RUVB_LARHH</name>
<keyword id="KW-0067">ATP-binding</keyword>
<keyword id="KW-0963">Cytoplasm</keyword>
<keyword id="KW-0227">DNA damage</keyword>
<keyword id="KW-0233">DNA recombination</keyword>
<keyword id="KW-0234">DNA repair</keyword>
<keyword id="KW-0238">DNA-binding</keyword>
<keyword id="KW-0378">Hydrolase</keyword>
<keyword id="KW-0547">Nucleotide-binding</keyword>
<keyword id="KW-1185">Reference proteome</keyword>
<dbReference type="EC" id="3.6.4.-" evidence="1"/>
<dbReference type="EMBL" id="CP001154">
    <property type="protein sequence ID" value="ACO73082.1"/>
    <property type="molecule type" value="Genomic_DNA"/>
</dbReference>
<dbReference type="RefSeq" id="WP_012695577.1">
    <property type="nucleotide sequence ID" value="NC_012559.1"/>
</dbReference>
<dbReference type="SMR" id="C1D9W9"/>
<dbReference type="STRING" id="557598.LHK_00086"/>
<dbReference type="GeneID" id="75109625"/>
<dbReference type="KEGG" id="lhk:LHK_00086"/>
<dbReference type="eggNOG" id="COG2255">
    <property type="taxonomic scope" value="Bacteria"/>
</dbReference>
<dbReference type="HOGENOM" id="CLU_055599_1_0_4"/>
<dbReference type="Proteomes" id="UP000002010">
    <property type="component" value="Chromosome"/>
</dbReference>
<dbReference type="GO" id="GO:0005737">
    <property type="term" value="C:cytoplasm"/>
    <property type="evidence" value="ECO:0007669"/>
    <property type="project" value="UniProtKB-SubCell"/>
</dbReference>
<dbReference type="GO" id="GO:0048476">
    <property type="term" value="C:Holliday junction resolvase complex"/>
    <property type="evidence" value="ECO:0007669"/>
    <property type="project" value="UniProtKB-UniRule"/>
</dbReference>
<dbReference type="GO" id="GO:0005524">
    <property type="term" value="F:ATP binding"/>
    <property type="evidence" value="ECO:0007669"/>
    <property type="project" value="UniProtKB-UniRule"/>
</dbReference>
<dbReference type="GO" id="GO:0016887">
    <property type="term" value="F:ATP hydrolysis activity"/>
    <property type="evidence" value="ECO:0007669"/>
    <property type="project" value="InterPro"/>
</dbReference>
<dbReference type="GO" id="GO:0000400">
    <property type="term" value="F:four-way junction DNA binding"/>
    <property type="evidence" value="ECO:0007669"/>
    <property type="project" value="UniProtKB-UniRule"/>
</dbReference>
<dbReference type="GO" id="GO:0009378">
    <property type="term" value="F:four-way junction helicase activity"/>
    <property type="evidence" value="ECO:0007669"/>
    <property type="project" value="InterPro"/>
</dbReference>
<dbReference type="GO" id="GO:0006310">
    <property type="term" value="P:DNA recombination"/>
    <property type="evidence" value="ECO:0007669"/>
    <property type="project" value="UniProtKB-UniRule"/>
</dbReference>
<dbReference type="GO" id="GO:0006281">
    <property type="term" value="P:DNA repair"/>
    <property type="evidence" value="ECO:0007669"/>
    <property type="project" value="UniProtKB-UniRule"/>
</dbReference>
<dbReference type="CDD" id="cd00009">
    <property type="entry name" value="AAA"/>
    <property type="match status" value="1"/>
</dbReference>
<dbReference type="FunFam" id="1.10.10.10:FF:000086">
    <property type="entry name" value="Holliday junction ATP-dependent DNA helicase RuvB"/>
    <property type="match status" value="1"/>
</dbReference>
<dbReference type="FunFam" id="1.10.8.60:FF:000023">
    <property type="entry name" value="Holliday junction ATP-dependent DNA helicase RuvB"/>
    <property type="match status" value="1"/>
</dbReference>
<dbReference type="FunFam" id="3.40.50.300:FF:000073">
    <property type="entry name" value="Holliday junction ATP-dependent DNA helicase RuvB"/>
    <property type="match status" value="1"/>
</dbReference>
<dbReference type="Gene3D" id="1.10.8.60">
    <property type="match status" value="1"/>
</dbReference>
<dbReference type="Gene3D" id="3.40.50.300">
    <property type="entry name" value="P-loop containing nucleotide triphosphate hydrolases"/>
    <property type="match status" value="1"/>
</dbReference>
<dbReference type="Gene3D" id="1.10.10.10">
    <property type="entry name" value="Winged helix-like DNA-binding domain superfamily/Winged helix DNA-binding domain"/>
    <property type="match status" value="1"/>
</dbReference>
<dbReference type="HAMAP" id="MF_00016">
    <property type="entry name" value="DNA_HJ_migration_RuvB"/>
    <property type="match status" value="1"/>
</dbReference>
<dbReference type="InterPro" id="IPR003593">
    <property type="entry name" value="AAA+_ATPase"/>
</dbReference>
<dbReference type="InterPro" id="IPR041445">
    <property type="entry name" value="AAA_lid_4"/>
</dbReference>
<dbReference type="InterPro" id="IPR004605">
    <property type="entry name" value="DNA_helicase_Holl-junc_RuvB"/>
</dbReference>
<dbReference type="InterPro" id="IPR027417">
    <property type="entry name" value="P-loop_NTPase"/>
</dbReference>
<dbReference type="InterPro" id="IPR008824">
    <property type="entry name" value="RuvB-like_N"/>
</dbReference>
<dbReference type="InterPro" id="IPR008823">
    <property type="entry name" value="RuvB_C"/>
</dbReference>
<dbReference type="InterPro" id="IPR036388">
    <property type="entry name" value="WH-like_DNA-bd_sf"/>
</dbReference>
<dbReference type="InterPro" id="IPR036390">
    <property type="entry name" value="WH_DNA-bd_sf"/>
</dbReference>
<dbReference type="NCBIfam" id="NF000868">
    <property type="entry name" value="PRK00080.1"/>
    <property type="match status" value="1"/>
</dbReference>
<dbReference type="NCBIfam" id="TIGR00635">
    <property type="entry name" value="ruvB"/>
    <property type="match status" value="1"/>
</dbReference>
<dbReference type="PANTHER" id="PTHR42848">
    <property type="match status" value="1"/>
</dbReference>
<dbReference type="PANTHER" id="PTHR42848:SF1">
    <property type="entry name" value="HOLLIDAY JUNCTION BRANCH MIGRATION COMPLEX SUBUNIT RUVB"/>
    <property type="match status" value="1"/>
</dbReference>
<dbReference type="Pfam" id="PF17864">
    <property type="entry name" value="AAA_lid_4"/>
    <property type="match status" value="1"/>
</dbReference>
<dbReference type="Pfam" id="PF05491">
    <property type="entry name" value="RuvB_C"/>
    <property type="match status" value="1"/>
</dbReference>
<dbReference type="Pfam" id="PF05496">
    <property type="entry name" value="RuvB_N"/>
    <property type="match status" value="1"/>
</dbReference>
<dbReference type="SMART" id="SM00382">
    <property type="entry name" value="AAA"/>
    <property type="match status" value="1"/>
</dbReference>
<dbReference type="SUPFAM" id="SSF52540">
    <property type="entry name" value="P-loop containing nucleoside triphosphate hydrolases"/>
    <property type="match status" value="1"/>
</dbReference>
<dbReference type="SUPFAM" id="SSF46785">
    <property type="entry name" value="Winged helix' DNA-binding domain"/>
    <property type="match status" value="1"/>
</dbReference>
<sequence length="345" mass="37748">MIETDALSGGTPRRLVTQQPLSSQEEALERALRPKALDDYVGQKKAREQLEIFIEAAKKRGEALDHVLLFGPPGLGKTTLAHIISRELGVNLRQTSGPVLERAGDLAALLTNLEPHDVLFIDEIHRLSPVVEEILYPALEDYQIDIMIGEGPAARSVKIDLPPFTLVGATTRAGMLTNPLRDRFGIVARLEFYTPEELTRIVRRSAGLLEVQLGEEGAFEVARRSRGTPRIANRLLRRVRDFAEVRADGVVTAAVADAALSMLDVDPAGLDVMDRKLLAAVLEKFGGGPVGLDNVAAAIGESTDTIEDVIEPYLIQQGYLQRTPRGRMATALAWTHFGFVPPERV</sequence>
<evidence type="ECO:0000255" key="1">
    <source>
        <dbReference type="HAMAP-Rule" id="MF_00016"/>
    </source>
</evidence>
<evidence type="ECO:0000256" key="2">
    <source>
        <dbReference type="SAM" id="MobiDB-lite"/>
    </source>
</evidence>
<organism>
    <name type="scientific">Laribacter hongkongensis (strain HLHK9)</name>
    <dbReference type="NCBI Taxonomy" id="557598"/>
    <lineage>
        <taxon>Bacteria</taxon>
        <taxon>Pseudomonadati</taxon>
        <taxon>Pseudomonadota</taxon>
        <taxon>Betaproteobacteria</taxon>
        <taxon>Neisseriales</taxon>
        <taxon>Aquaspirillaceae</taxon>
        <taxon>Laribacter</taxon>
    </lineage>
</organism>
<gene>
    <name evidence="1" type="primary">ruvB</name>
    <name type="ordered locus">LHK_00086</name>
</gene>
<proteinExistence type="inferred from homology"/>
<accession>C1D9W9</accession>
<feature type="chain" id="PRO_1000116645" description="Holliday junction branch migration complex subunit RuvB">
    <location>
        <begin position="1"/>
        <end position="345"/>
    </location>
</feature>
<feature type="region of interest" description="Disordered" evidence="2">
    <location>
        <begin position="1"/>
        <end position="22"/>
    </location>
</feature>
<feature type="region of interest" description="Large ATPase domain (RuvB-L)" evidence="1">
    <location>
        <begin position="4"/>
        <end position="193"/>
    </location>
</feature>
<feature type="region of interest" description="Small ATPAse domain (RuvB-S)" evidence="1">
    <location>
        <begin position="194"/>
        <end position="264"/>
    </location>
</feature>
<feature type="region of interest" description="Head domain (RuvB-H)" evidence="1">
    <location>
        <begin position="267"/>
        <end position="345"/>
    </location>
</feature>
<feature type="binding site" evidence="1">
    <location>
        <position position="32"/>
    </location>
    <ligand>
        <name>ATP</name>
        <dbReference type="ChEBI" id="CHEBI:30616"/>
    </ligand>
</feature>
<feature type="binding site" evidence="1">
    <location>
        <position position="33"/>
    </location>
    <ligand>
        <name>ATP</name>
        <dbReference type="ChEBI" id="CHEBI:30616"/>
    </ligand>
</feature>
<feature type="binding site" evidence="1">
    <location>
        <position position="74"/>
    </location>
    <ligand>
        <name>ATP</name>
        <dbReference type="ChEBI" id="CHEBI:30616"/>
    </ligand>
</feature>
<feature type="binding site" evidence="1">
    <location>
        <position position="77"/>
    </location>
    <ligand>
        <name>ATP</name>
        <dbReference type="ChEBI" id="CHEBI:30616"/>
    </ligand>
</feature>
<feature type="binding site" evidence="1">
    <location>
        <position position="78"/>
    </location>
    <ligand>
        <name>ATP</name>
        <dbReference type="ChEBI" id="CHEBI:30616"/>
    </ligand>
</feature>
<feature type="binding site" evidence="1">
    <location>
        <position position="78"/>
    </location>
    <ligand>
        <name>Mg(2+)</name>
        <dbReference type="ChEBI" id="CHEBI:18420"/>
    </ligand>
</feature>
<feature type="binding site" evidence="1">
    <location>
        <position position="79"/>
    </location>
    <ligand>
        <name>ATP</name>
        <dbReference type="ChEBI" id="CHEBI:30616"/>
    </ligand>
</feature>
<feature type="binding site" evidence="1">
    <location>
        <begin position="140"/>
        <end position="142"/>
    </location>
    <ligand>
        <name>ATP</name>
        <dbReference type="ChEBI" id="CHEBI:30616"/>
    </ligand>
</feature>
<feature type="binding site" evidence="1">
    <location>
        <position position="183"/>
    </location>
    <ligand>
        <name>ATP</name>
        <dbReference type="ChEBI" id="CHEBI:30616"/>
    </ligand>
</feature>
<feature type="binding site" evidence="1">
    <location>
        <position position="193"/>
    </location>
    <ligand>
        <name>ATP</name>
        <dbReference type="ChEBI" id="CHEBI:30616"/>
    </ligand>
</feature>
<feature type="binding site" evidence="1">
    <location>
        <position position="230"/>
    </location>
    <ligand>
        <name>ATP</name>
        <dbReference type="ChEBI" id="CHEBI:30616"/>
    </ligand>
</feature>
<feature type="binding site" evidence="1">
    <location>
        <position position="322"/>
    </location>
    <ligand>
        <name>DNA</name>
        <dbReference type="ChEBI" id="CHEBI:16991"/>
    </ligand>
</feature>
<feature type="binding site" evidence="1">
    <location>
        <position position="327"/>
    </location>
    <ligand>
        <name>DNA</name>
        <dbReference type="ChEBI" id="CHEBI:16991"/>
    </ligand>
</feature>
<protein>
    <recommendedName>
        <fullName evidence="1">Holliday junction branch migration complex subunit RuvB</fullName>
        <ecNumber evidence="1">3.6.4.-</ecNumber>
    </recommendedName>
</protein>
<reference key="1">
    <citation type="journal article" date="2009" name="PLoS Genet.">
        <title>The complete genome and proteome of Laribacter hongkongensis reveal potential mechanisms for adaptations to different temperatures and habitats.</title>
        <authorList>
            <person name="Woo P.C.Y."/>
            <person name="Lau S.K.P."/>
            <person name="Tse H."/>
            <person name="Teng J.L.L."/>
            <person name="Curreem S.O."/>
            <person name="Tsang A.K.L."/>
            <person name="Fan R.Y.Y."/>
            <person name="Wong G.K.M."/>
            <person name="Huang Y."/>
            <person name="Loman N.J."/>
            <person name="Snyder L.A.S."/>
            <person name="Cai J.J."/>
            <person name="Huang J.-D."/>
            <person name="Mak W."/>
            <person name="Pallen M.J."/>
            <person name="Lok S."/>
            <person name="Yuen K.-Y."/>
        </authorList>
    </citation>
    <scope>NUCLEOTIDE SEQUENCE [LARGE SCALE GENOMIC DNA]</scope>
    <source>
        <strain>HLHK9</strain>
    </source>
</reference>